<organism>
    <name type="scientific">Salmonella agona (strain SL483)</name>
    <dbReference type="NCBI Taxonomy" id="454166"/>
    <lineage>
        <taxon>Bacteria</taxon>
        <taxon>Pseudomonadati</taxon>
        <taxon>Pseudomonadota</taxon>
        <taxon>Gammaproteobacteria</taxon>
        <taxon>Enterobacterales</taxon>
        <taxon>Enterobacteriaceae</taxon>
        <taxon>Salmonella</taxon>
    </lineage>
</organism>
<reference key="1">
    <citation type="journal article" date="2011" name="J. Bacteriol.">
        <title>Comparative genomics of 28 Salmonella enterica isolates: evidence for CRISPR-mediated adaptive sublineage evolution.</title>
        <authorList>
            <person name="Fricke W.F."/>
            <person name="Mammel M.K."/>
            <person name="McDermott P.F."/>
            <person name="Tartera C."/>
            <person name="White D.G."/>
            <person name="Leclerc J.E."/>
            <person name="Ravel J."/>
            <person name="Cebula T.A."/>
        </authorList>
    </citation>
    <scope>NUCLEOTIDE SEQUENCE [LARGE SCALE GENOMIC DNA]</scope>
    <source>
        <strain>SL483</strain>
    </source>
</reference>
<keyword id="KW-0004">4Fe-4S</keyword>
<keyword id="KW-0408">Iron</keyword>
<keyword id="KW-0411">Iron-sulfur</keyword>
<keyword id="KW-0479">Metal-binding</keyword>
<keyword id="KW-0489">Methyltransferase</keyword>
<keyword id="KW-0698">rRNA processing</keyword>
<keyword id="KW-0949">S-adenosyl-L-methionine</keyword>
<keyword id="KW-0808">Transferase</keyword>
<accession>B5F101</accession>
<proteinExistence type="inferred from homology"/>
<comment type="function">
    <text evidence="1">Catalyzes the formation of 5-methyl-uridine at position 747 (m5U747) in 23S rRNA.</text>
</comment>
<comment type="catalytic activity">
    <reaction evidence="1">
        <text>uridine(747) in 23S rRNA + S-adenosyl-L-methionine = 5-methyluridine(747) in 23S rRNA + S-adenosyl-L-homocysteine + H(+)</text>
        <dbReference type="Rhea" id="RHEA:42628"/>
        <dbReference type="Rhea" id="RHEA-COMP:10154"/>
        <dbReference type="Rhea" id="RHEA-COMP:10155"/>
        <dbReference type="ChEBI" id="CHEBI:15378"/>
        <dbReference type="ChEBI" id="CHEBI:57856"/>
        <dbReference type="ChEBI" id="CHEBI:59789"/>
        <dbReference type="ChEBI" id="CHEBI:65315"/>
        <dbReference type="ChEBI" id="CHEBI:74447"/>
        <dbReference type="EC" id="2.1.1.189"/>
    </reaction>
</comment>
<comment type="similarity">
    <text evidence="1">Belongs to the class I-like SAM-binding methyltransferase superfamily. RNA M5U methyltransferase family. RlmC subfamily.</text>
</comment>
<evidence type="ECO:0000255" key="1">
    <source>
        <dbReference type="HAMAP-Rule" id="MF_01012"/>
    </source>
</evidence>
<sequence>MQCALYDAGRCRSCQWITQSVNEQLSAKTADLHRLLAGLPVEQWCAPTGGPEQRFRNKAKMVVSGSVEKPLFGMLHRDGTPVDLCGCPLYPASFAPVFSALKPFIARAGLTPYNVARKRGELKYLLLTESQFDGGMMLRFVLRSETKLTQLRAALPWLRAQLPQLKVITANIQPVHMAIMEGETEIYLTDQQALAERFNDVPLWIRPQSFFQTNPTVASRLYATARDWVGQLPVRHMWDLFCGVGGFGLHCATPQMQLTGIEIAPEAIACAKQSAAELGLTRLHFQALDSTQFATAQGETPDLVLVNPPRRGIGKPLCDYLAQMAPRFIIYSSCNAQTMAQDIRHLPNYRIQRVQLFDMFPHTAHYEVLTLLCRL</sequence>
<protein>
    <recommendedName>
        <fullName evidence="1">23S rRNA (uracil(747)-C(5))-methyltransferase RlmC</fullName>
        <ecNumber evidence="1">2.1.1.189</ecNumber>
    </recommendedName>
    <alternativeName>
        <fullName evidence="1">23S rRNA(m5U747)-methyltransferase</fullName>
    </alternativeName>
</protein>
<name>RLMC_SALA4</name>
<dbReference type="EC" id="2.1.1.189" evidence="1"/>
<dbReference type="EMBL" id="CP001138">
    <property type="protein sequence ID" value="ACH52868.1"/>
    <property type="molecule type" value="Genomic_DNA"/>
</dbReference>
<dbReference type="RefSeq" id="WP_001149795.1">
    <property type="nucleotide sequence ID" value="NC_011149.1"/>
</dbReference>
<dbReference type="SMR" id="B5F101"/>
<dbReference type="KEGG" id="sea:SeAg_B0919"/>
<dbReference type="HOGENOM" id="CLU_014689_0_0_6"/>
<dbReference type="Proteomes" id="UP000008819">
    <property type="component" value="Chromosome"/>
</dbReference>
<dbReference type="GO" id="GO:0051539">
    <property type="term" value="F:4 iron, 4 sulfur cluster binding"/>
    <property type="evidence" value="ECO:0007669"/>
    <property type="project" value="UniProtKB-KW"/>
</dbReference>
<dbReference type="GO" id="GO:0005506">
    <property type="term" value="F:iron ion binding"/>
    <property type="evidence" value="ECO:0007669"/>
    <property type="project" value="UniProtKB-UniRule"/>
</dbReference>
<dbReference type="GO" id="GO:0070041">
    <property type="term" value="F:rRNA (uridine-C5-)-methyltransferase activity"/>
    <property type="evidence" value="ECO:0007669"/>
    <property type="project" value="UniProtKB-UniRule"/>
</dbReference>
<dbReference type="GO" id="GO:0070475">
    <property type="term" value="P:rRNA base methylation"/>
    <property type="evidence" value="ECO:0007669"/>
    <property type="project" value="TreeGrafter"/>
</dbReference>
<dbReference type="CDD" id="cd02440">
    <property type="entry name" value="AdoMet_MTases"/>
    <property type="match status" value="1"/>
</dbReference>
<dbReference type="FunFam" id="2.40.50.1070:FF:000002">
    <property type="entry name" value="23S rRNA (uracil(747)-C(5))-methyltransferase RlmC"/>
    <property type="match status" value="1"/>
</dbReference>
<dbReference type="FunFam" id="3.40.50.150:FF:000049">
    <property type="entry name" value="23S rRNA (uracil(747)-C(5))-methyltransferase RlmC"/>
    <property type="match status" value="1"/>
</dbReference>
<dbReference type="Gene3D" id="2.40.50.1070">
    <property type="match status" value="1"/>
</dbReference>
<dbReference type="Gene3D" id="3.40.50.150">
    <property type="entry name" value="Vaccinia Virus protein VP39"/>
    <property type="match status" value="1"/>
</dbReference>
<dbReference type="HAMAP" id="MF_01012">
    <property type="entry name" value="23SrRNA_methyltr_RlmC"/>
    <property type="match status" value="1"/>
</dbReference>
<dbReference type="InterPro" id="IPR011825">
    <property type="entry name" value="23SrRNA_MeTrfase_RlmC"/>
</dbReference>
<dbReference type="InterPro" id="IPR030390">
    <property type="entry name" value="MeTrfase_TrmA_AS"/>
</dbReference>
<dbReference type="InterPro" id="IPR030391">
    <property type="entry name" value="MeTrfase_TrmA_CS"/>
</dbReference>
<dbReference type="InterPro" id="IPR029063">
    <property type="entry name" value="SAM-dependent_MTases_sf"/>
</dbReference>
<dbReference type="InterPro" id="IPR010280">
    <property type="entry name" value="U5_MeTrfase_fam"/>
</dbReference>
<dbReference type="NCBIfam" id="TIGR02085">
    <property type="entry name" value="meth_trns_rumB"/>
    <property type="match status" value="1"/>
</dbReference>
<dbReference type="PANTHER" id="PTHR11061">
    <property type="entry name" value="RNA M5U METHYLTRANSFERASE"/>
    <property type="match status" value="1"/>
</dbReference>
<dbReference type="PANTHER" id="PTHR11061:SF30">
    <property type="entry name" value="TRNA (URACIL(54)-C(5))-METHYLTRANSFERASE"/>
    <property type="match status" value="1"/>
</dbReference>
<dbReference type="Pfam" id="PF05958">
    <property type="entry name" value="tRNA_U5-meth_tr"/>
    <property type="match status" value="1"/>
</dbReference>
<dbReference type="SUPFAM" id="SSF53335">
    <property type="entry name" value="S-adenosyl-L-methionine-dependent methyltransferases"/>
    <property type="match status" value="1"/>
</dbReference>
<dbReference type="PROSITE" id="PS51687">
    <property type="entry name" value="SAM_MT_RNA_M5U"/>
    <property type="match status" value="1"/>
</dbReference>
<dbReference type="PROSITE" id="PS01230">
    <property type="entry name" value="TRMA_1"/>
    <property type="match status" value="1"/>
</dbReference>
<dbReference type="PROSITE" id="PS01231">
    <property type="entry name" value="TRMA_2"/>
    <property type="match status" value="1"/>
</dbReference>
<feature type="chain" id="PRO_1000200872" description="23S rRNA (uracil(747)-C(5))-methyltransferase RlmC">
    <location>
        <begin position="1"/>
        <end position="375"/>
    </location>
</feature>
<feature type="active site" description="Nucleophile" evidence="1">
    <location>
        <position position="334"/>
    </location>
</feature>
<feature type="binding site" evidence="1">
    <location>
        <position position="3"/>
    </location>
    <ligand>
        <name>[4Fe-4S] cluster</name>
        <dbReference type="ChEBI" id="CHEBI:49883"/>
    </ligand>
</feature>
<feature type="binding site" evidence="1">
    <location>
        <position position="11"/>
    </location>
    <ligand>
        <name>[4Fe-4S] cluster</name>
        <dbReference type="ChEBI" id="CHEBI:49883"/>
    </ligand>
</feature>
<feature type="binding site" evidence="1">
    <location>
        <position position="14"/>
    </location>
    <ligand>
        <name>[4Fe-4S] cluster</name>
        <dbReference type="ChEBI" id="CHEBI:49883"/>
    </ligand>
</feature>
<feature type="binding site" evidence="1">
    <location>
        <position position="87"/>
    </location>
    <ligand>
        <name>[4Fe-4S] cluster</name>
        <dbReference type="ChEBI" id="CHEBI:49883"/>
    </ligand>
</feature>
<feature type="binding site" evidence="1">
    <location>
        <position position="212"/>
    </location>
    <ligand>
        <name>S-adenosyl-L-methionine</name>
        <dbReference type="ChEBI" id="CHEBI:59789"/>
    </ligand>
</feature>
<feature type="binding site" evidence="1">
    <location>
        <position position="241"/>
    </location>
    <ligand>
        <name>S-adenosyl-L-methionine</name>
        <dbReference type="ChEBI" id="CHEBI:59789"/>
    </ligand>
</feature>
<feature type="binding site" evidence="1">
    <location>
        <position position="262"/>
    </location>
    <ligand>
        <name>S-adenosyl-L-methionine</name>
        <dbReference type="ChEBI" id="CHEBI:59789"/>
    </ligand>
</feature>
<feature type="binding site" evidence="1">
    <location>
        <position position="307"/>
    </location>
    <ligand>
        <name>S-adenosyl-L-methionine</name>
        <dbReference type="ChEBI" id="CHEBI:59789"/>
    </ligand>
</feature>
<gene>
    <name evidence="1" type="primary">rlmC</name>
    <name type="synonym">rumB</name>
    <name type="ordered locus">SeAg_B0919</name>
</gene>